<accession>A6L1Z2</accession>
<evidence type="ECO:0000250" key="1"/>
<evidence type="ECO:0000255" key="2"/>
<evidence type="ECO:0000305" key="3"/>
<gene>
    <name type="ordered locus">BVU_2041</name>
</gene>
<reference key="1">
    <citation type="journal article" date="2007" name="PLoS Biol.">
        <title>Evolution of symbiotic bacteria in the distal human intestine.</title>
        <authorList>
            <person name="Xu J."/>
            <person name="Mahowald M.A."/>
            <person name="Ley R.E."/>
            <person name="Lozupone C.A."/>
            <person name="Hamady M."/>
            <person name="Martens E.C."/>
            <person name="Henrissat B."/>
            <person name="Coutinho P.M."/>
            <person name="Minx P."/>
            <person name="Latreille P."/>
            <person name="Cordum H."/>
            <person name="Van Brunt A."/>
            <person name="Kim K."/>
            <person name="Fulton R.S."/>
            <person name="Fulton L.A."/>
            <person name="Clifton S.W."/>
            <person name="Wilson R.K."/>
            <person name="Knight R.D."/>
            <person name="Gordon J.I."/>
        </authorList>
    </citation>
    <scope>NUCLEOTIDE SEQUENCE [LARGE SCALE GENOMIC DNA]</scope>
    <source>
        <strain>ATCC 8482 / DSM 1447 / JCM 5826 / CCUG 4940 / NBRC 14291 / NCTC 11154</strain>
    </source>
</reference>
<name>G1095_PHOV8</name>
<feature type="signal peptide" evidence="2">
    <location>
        <begin position="1"/>
        <end position="27"/>
    </location>
</feature>
<feature type="chain" id="PRO_0000348557" description="Glycosyl hydrolase family 109 protein 5">
    <location>
        <begin position="28"/>
        <end position="520"/>
    </location>
</feature>
<feature type="binding site" evidence="1">
    <location>
        <begin position="77"/>
        <end position="78"/>
    </location>
    <ligand>
        <name>NAD(+)</name>
        <dbReference type="ChEBI" id="CHEBI:57540"/>
    </ligand>
</feature>
<feature type="binding site" evidence="1">
    <location>
        <position position="99"/>
    </location>
    <ligand>
        <name>NAD(+)</name>
        <dbReference type="ChEBI" id="CHEBI:57540"/>
    </ligand>
</feature>
<feature type="binding site" evidence="1">
    <location>
        <begin position="147"/>
        <end position="150"/>
    </location>
    <ligand>
        <name>NAD(+)</name>
        <dbReference type="ChEBI" id="CHEBI:57540"/>
    </ligand>
</feature>
<feature type="binding site" evidence="1">
    <location>
        <begin position="167"/>
        <end position="168"/>
    </location>
    <ligand>
        <name>NAD(+)</name>
        <dbReference type="ChEBI" id="CHEBI:57540"/>
    </ligand>
</feature>
<feature type="binding site" evidence="1">
    <location>
        <position position="196"/>
    </location>
    <ligand>
        <name>NAD(+)</name>
        <dbReference type="ChEBI" id="CHEBI:57540"/>
    </ligand>
</feature>
<feature type="binding site" evidence="1">
    <location>
        <position position="225"/>
    </location>
    <ligand>
        <name>substrate</name>
    </ligand>
</feature>
<feature type="binding site" evidence="1">
    <location>
        <position position="248"/>
    </location>
    <ligand>
        <name>substrate</name>
    </ligand>
</feature>
<feature type="binding site" evidence="1">
    <location>
        <begin position="260"/>
        <end position="263"/>
    </location>
    <ligand>
        <name>substrate</name>
    </ligand>
</feature>
<feature type="binding site" evidence="1">
    <location>
        <position position="260"/>
    </location>
    <ligand>
        <name>NAD(+)</name>
        <dbReference type="ChEBI" id="CHEBI:57540"/>
    </ligand>
</feature>
<feature type="binding site" evidence="1">
    <location>
        <position position="338"/>
    </location>
    <ligand>
        <name>substrate</name>
    </ligand>
</feature>
<protein>
    <recommendedName>
        <fullName>Glycosyl hydrolase family 109 protein 5</fullName>
        <ecNumber>3.2.1.-</ecNumber>
    </recommendedName>
</protein>
<keyword id="KW-0326">Glycosidase</keyword>
<keyword id="KW-0378">Hydrolase</keyword>
<keyword id="KW-0520">NAD</keyword>
<keyword id="KW-0732">Signal</keyword>
<comment type="function">
    <text evidence="1">Glycosidase.</text>
</comment>
<comment type="cofactor">
    <cofactor evidence="1">
        <name>NAD(+)</name>
        <dbReference type="ChEBI" id="CHEBI:57540"/>
    </cofactor>
    <text evidence="1">Binds 1 NAD(+) per subunit. The NAD(+) cannot dissociate.</text>
</comment>
<comment type="similarity">
    <text evidence="3">Belongs to the Gfo/Idh/MocA family. Glycosyl hydrolase 109 subfamily.</text>
</comment>
<organism>
    <name type="scientific">Phocaeicola vulgatus (strain ATCC 8482 / DSM 1447 / JCM 5826 / CCUG 4940 / NBRC 14291 / NCTC 11154)</name>
    <name type="common">Bacteroides vulgatus</name>
    <dbReference type="NCBI Taxonomy" id="435590"/>
    <lineage>
        <taxon>Bacteria</taxon>
        <taxon>Pseudomonadati</taxon>
        <taxon>Bacteroidota</taxon>
        <taxon>Bacteroidia</taxon>
        <taxon>Bacteroidales</taxon>
        <taxon>Bacteroidaceae</taxon>
        <taxon>Phocaeicola</taxon>
    </lineage>
</organism>
<proteinExistence type="inferred from homology"/>
<sequence>MRTFKSLMISLCMGTTLCMCLPQTTTAQTVSSGDSWTWDKGTIVIDTPERPTGQKSVLGLTTPKMEVVRVGFVGLGMRGPGAVERFTYIPGTQIVALCDYEASRAEKCQDILKKASMPKAAIYSGEKGYEELCKRTDIDLVYIAADWLHHFPVAKCALENGKNVAIEVPSAMNLQECWDLINLSEKTRKHCMILENCCYDWFEMNTLNMAQQGVFGEVIRAQGAYIHNLSPFWDHYWKNGKEDKLGWRLDYNMKHRGDVYATHGLGPVAQALDIHRGDRITTLVAMDTKSVVGKDLVEKRTGEECKEFRNGDHTTTLLRTANGKVIEIQHNVMTPQPYNRLYQLTGSKGFANKYPVEGYALDAAQLTASGVQPKVDDLNSHGFLPQAEMEALVEKYQHPILKKYGEMAKEVGGHGGMDFIMDSRLVYCLQNGLPLDMDVYDLAEWCCLAELGAISMDNGCAAVAFPDFTRGEWNVTKGYKHAYASPEDENANMEKAKAFTAKLKEQGAKEWAKEAKKKKK</sequence>
<dbReference type="EC" id="3.2.1.-"/>
<dbReference type="EMBL" id="CP000139">
    <property type="protein sequence ID" value="ABR39706.1"/>
    <property type="molecule type" value="Genomic_DNA"/>
</dbReference>
<dbReference type="RefSeq" id="WP_011965420.1">
    <property type="nucleotide sequence ID" value="NZ_JANSWM010000120.1"/>
</dbReference>
<dbReference type="SMR" id="A6L1Z2"/>
<dbReference type="STRING" id="435590.BVU_2041"/>
<dbReference type="CAZy" id="GH109">
    <property type="family name" value="Glycoside Hydrolase Family 109"/>
</dbReference>
<dbReference type="PaxDb" id="435590-BVU_2041"/>
<dbReference type="GeneID" id="5303006"/>
<dbReference type="KEGG" id="bvu:BVU_2041"/>
<dbReference type="eggNOG" id="COG0673">
    <property type="taxonomic scope" value="Bacteria"/>
</dbReference>
<dbReference type="HOGENOM" id="CLU_046965_0_0_10"/>
<dbReference type="BioCyc" id="BVUL435590:G1G59-2133-MONOMER"/>
<dbReference type="Proteomes" id="UP000002861">
    <property type="component" value="Chromosome"/>
</dbReference>
<dbReference type="GO" id="GO:0016798">
    <property type="term" value="F:hydrolase activity, acting on glycosyl bonds"/>
    <property type="evidence" value="ECO:0007669"/>
    <property type="project" value="UniProtKB-KW"/>
</dbReference>
<dbReference type="GO" id="GO:0000166">
    <property type="term" value="F:nucleotide binding"/>
    <property type="evidence" value="ECO:0007669"/>
    <property type="project" value="InterPro"/>
</dbReference>
<dbReference type="Gene3D" id="3.30.360.10">
    <property type="entry name" value="Dihydrodipicolinate Reductase, domain 2"/>
    <property type="match status" value="1"/>
</dbReference>
<dbReference type="Gene3D" id="3.40.50.720">
    <property type="entry name" value="NAD(P)-binding Rossmann-like Domain"/>
    <property type="match status" value="1"/>
</dbReference>
<dbReference type="InterPro" id="IPR000683">
    <property type="entry name" value="Gfo/Idh/MocA-like_OxRdtase_N"/>
</dbReference>
<dbReference type="InterPro" id="IPR050463">
    <property type="entry name" value="Gfo/Idh/MocA_oxidrdct_glycsds"/>
</dbReference>
<dbReference type="InterPro" id="IPR049303">
    <property type="entry name" value="Glyco_hydro_109_C"/>
</dbReference>
<dbReference type="InterPro" id="IPR036291">
    <property type="entry name" value="NAD(P)-bd_dom_sf"/>
</dbReference>
<dbReference type="PANTHER" id="PTHR43818">
    <property type="entry name" value="BCDNA.GH03377"/>
    <property type="match status" value="1"/>
</dbReference>
<dbReference type="PANTHER" id="PTHR43818:SF1">
    <property type="entry name" value="GLYCOSYL HYDROLASE FAMILY 109 PROTEIN"/>
    <property type="match status" value="1"/>
</dbReference>
<dbReference type="Pfam" id="PF01408">
    <property type="entry name" value="GFO_IDH_MocA"/>
    <property type="match status" value="1"/>
</dbReference>
<dbReference type="Pfam" id="PF21252">
    <property type="entry name" value="Glyco_hydro_109_C"/>
    <property type="match status" value="1"/>
</dbReference>
<dbReference type="SUPFAM" id="SSF55347">
    <property type="entry name" value="Glyceraldehyde-3-phosphate dehydrogenase-like, C-terminal domain"/>
    <property type="match status" value="1"/>
</dbReference>
<dbReference type="SUPFAM" id="SSF51735">
    <property type="entry name" value="NAD(P)-binding Rossmann-fold domains"/>
    <property type="match status" value="1"/>
</dbReference>